<organism>
    <name type="scientific">Methanothermobacter thermautotrophicus (strain ATCC 29096 / DSM 1053 / JCM 10044 / NBRC 100330 / Delta H)</name>
    <name type="common">Methanobacterium thermoautotrophicum</name>
    <dbReference type="NCBI Taxonomy" id="187420"/>
    <lineage>
        <taxon>Archaea</taxon>
        <taxon>Methanobacteriati</taxon>
        <taxon>Methanobacteriota</taxon>
        <taxon>Methanomada group</taxon>
        <taxon>Methanobacteria</taxon>
        <taxon>Methanobacteriales</taxon>
        <taxon>Methanobacteriaceae</taxon>
        <taxon>Methanothermobacter</taxon>
    </lineage>
</organism>
<accession>O27113</accession>
<sequence length="286" mass="31475">MEKRENPYLRYLRRERLPHIFCAGCGNGIVLNSFFKGMEMAGIDFDNIAMVSGIGCSSRIPGYVNCDSLHTTHGRPISFATGLKLGNPSLDVVVFTGDGDAAAIGGNHLIHGARRNIDMTVICINNSIYGMTGGQISPTFPEGSYGSTAPYGALEDPFDLAELVTAAGASYVARWTTAHPLQLANSIKKGLKNRGFSFIEAISQCPTYFGRKNRMRSPVEMMRFMKENSLNRRKALKMEPDEVEGKIIVGEFANRPQPELCEKICSMVDEKSGRALDMIRSAYRDD</sequence>
<dbReference type="EC" id="1.2.7.3"/>
<dbReference type="EMBL" id="AE000666">
    <property type="protein sequence ID" value="AAB85530.1"/>
    <property type="molecule type" value="Genomic_DNA"/>
</dbReference>
<dbReference type="PIR" id="A69005">
    <property type="entry name" value="A69005"/>
</dbReference>
<dbReference type="RefSeq" id="WP_010876665.1">
    <property type="nucleotide sequence ID" value="NC_000916.1"/>
</dbReference>
<dbReference type="SMR" id="O27113"/>
<dbReference type="FunCoup" id="O27113">
    <property type="interactions" value="69"/>
</dbReference>
<dbReference type="STRING" id="187420.MTH_1034"/>
<dbReference type="PaxDb" id="187420-MTH_1034"/>
<dbReference type="EnsemblBacteria" id="AAB85530">
    <property type="protein sequence ID" value="AAB85530"/>
    <property type="gene ID" value="MTH_1034"/>
</dbReference>
<dbReference type="GeneID" id="1471442"/>
<dbReference type="KEGG" id="mth:MTH_1034"/>
<dbReference type="PATRIC" id="fig|187420.15.peg.1017"/>
<dbReference type="HOGENOM" id="CLU_048564_2_0_2"/>
<dbReference type="InParanoid" id="O27113"/>
<dbReference type="Proteomes" id="UP000005223">
    <property type="component" value="Chromosome"/>
</dbReference>
<dbReference type="GO" id="GO:0047553">
    <property type="term" value="F:2-oxoglutarate synthase activity"/>
    <property type="evidence" value="ECO:0007669"/>
    <property type="project" value="UniProtKB-EC"/>
</dbReference>
<dbReference type="GO" id="GO:0030976">
    <property type="term" value="F:thiamine pyrophosphate binding"/>
    <property type="evidence" value="ECO:0007669"/>
    <property type="project" value="InterPro"/>
</dbReference>
<dbReference type="GO" id="GO:0006082">
    <property type="term" value="P:organic acid metabolic process"/>
    <property type="evidence" value="ECO:0007669"/>
    <property type="project" value="UniProtKB-ARBA"/>
</dbReference>
<dbReference type="GO" id="GO:0044272">
    <property type="term" value="P:sulfur compound biosynthetic process"/>
    <property type="evidence" value="ECO:0007669"/>
    <property type="project" value="UniProtKB-ARBA"/>
</dbReference>
<dbReference type="CDD" id="cd03375">
    <property type="entry name" value="TPP_OGFOR"/>
    <property type="match status" value="1"/>
</dbReference>
<dbReference type="Gene3D" id="3.40.50.970">
    <property type="match status" value="1"/>
</dbReference>
<dbReference type="InterPro" id="IPR051457">
    <property type="entry name" value="2-oxoacid:Fd_oxidoreductase"/>
</dbReference>
<dbReference type="InterPro" id="IPR029061">
    <property type="entry name" value="THDP-binding"/>
</dbReference>
<dbReference type="InterPro" id="IPR011766">
    <property type="entry name" value="TPP_enzyme_TPP-bd"/>
</dbReference>
<dbReference type="PANTHER" id="PTHR48084">
    <property type="entry name" value="2-OXOGLUTARATE OXIDOREDUCTASE SUBUNIT KORB-RELATED"/>
    <property type="match status" value="1"/>
</dbReference>
<dbReference type="PANTHER" id="PTHR48084:SF1">
    <property type="entry name" value="2-OXOGLUTARATE SYNTHASE SUBUNIT KORB"/>
    <property type="match status" value="1"/>
</dbReference>
<dbReference type="Pfam" id="PF02775">
    <property type="entry name" value="TPP_enzyme_C"/>
    <property type="match status" value="1"/>
</dbReference>
<dbReference type="SUPFAM" id="SSF52518">
    <property type="entry name" value="Thiamin diphosphate-binding fold (THDP-binding)"/>
    <property type="match status" value="1"/>
</dbReference>
<feature type="chain" id="PRO_0000099943" description="2-oxoglutarate synthase subunit KorB">
    <location>
        <begin position="1"/>
        <end position="286"/>
    </location>
</feature>
<comment type="catalytic activity">
    <reaction>
        <text>2 oxidized [2Fe-2S]-[ferredoxin] + 2-oxoglutarate + CoA = succinyl-CoA + 2 reduced [2Fe-2S]-[ferredoxin] + CO2 + H(+)</text>
        <dbReference type="Rhea" id="RHEA:17297"/>
        <dbReference type="Rhea" id="RHEA-COMP:10000"/>
        <dbReference type="Rhea" id="RHEA-COMP:10001"/>
        <dbReference type="ChEBI" id="CHEBI:15378"/>
        <dbReference type="ChEBI" id="CHEBI:16526"/>
        <dbReference type="ChEBI" id="CHEBI:16810"/>
        <dbReference type="ChEBI" id="CHEBI:33737"/>
        <dbReference type="ChEBI" id="CHEBI:33738"/>
        <dbReference type="ChEBI" id="CHEBI:57287"/>
        <dbReference type="ChEBI" id="CHEBI:57292"/>
        <dbReference type="EC" id="1.2.7.3"/>
    </reaction>
</comment>
<comment type="subunit">
    <text>Heterotetramer of the KorA, KorB, KorC and KorD subunits.</text>
</comment>
<gene>
    <name type="primary">korB</name>
    <name type="ordered locus">MTH_1034</name>
</gene>
<protein>
    <recommendedName>
        <fullName>2-oxoglutarate synthase subunit KorB</fullName>
        <ecNumber>1.2.7.3</ecNumber>
    </recommendedName>
    <alternativeName>
        <fullName>2-ketoglutarate oxidoreductase beta chain</fullName>
        <shortName>KOR</shortName>
    </alternativeName>
    <alternativeName>
        <fullName>2-oxoglutarate-ferredoxin oxidoreductase subunit beta</fullName>
    </alternativeName>
</protein>
<keyword id="KW-0560">Oxidoreductase</keyword>
<keyword id="KW-1185">Reference proteome</keyword>
<proteinExistence type="predicted"/>
<name>KORB_METTH</name>
<reference key="1">
    <citation type="journal article" date="1997" name="J. Bacteriol.">
        <title>Complete genome sequence of Methanobacterium thermoautotrophicum deltaH: functional analysis and comparative genomics.</title>
        <authorList>
            <person name="Smith D.R."/>
            <person name="Doucette-Stamm L.A."/>
            <person name="Deloughery C."/>
            <person name="Lee H.-M."/>
            <person name="Dubois J."/>
            <person name="Aldredge T."/>
            <person name="Bashirzadeh R."/>
            <person name="Blakely D."/>
            <person name="Cook R."/>
            <person name="Gilbert K."/>
            <person name="Harrison D."/>
            <person name="Hoang L."/>
            <person name="Keagle P."/>
            <person name="Lumm W."/>
            <person name="Pothier B."/>
            <person name="Qiu D."/>
            <person name="Spadafora R."/>
            <person name="Vicare R."/>
            <person name="Wang Y."/>
            <person name="Wierzbowski J."/>
            <person name="Gibson R."/>
            <person name="Jiwani N."/>
            <person name="Caruso A."/>
            <person name="Bush D."/>
            <person name="Safer H."/>
            <person name="Patwell D."/>
            <person name="Prabhakar S."/>
            <person name="McDougall S."/>
            <person name="Shimer G."/>
            <person name="Goyal A."/>
            <person name="Pietrovski S."/>
            <person name="Church G.M."/>
            <person name="Daniels C.J."/>
            <person name="Mao J.-I."/>
            <person name="Rice P."/>
            <person name="Noelling J."/>
            <person name="Reeve J.N."/>
        </authorList>
    </citation>
    <scope>NUCLEOTIDE SEQUENCE [LARGE SCALE GENOMIC DNA]</scope>
    <source>
        <strain>ATCC 29096 / DSM 1053 / JCM 10044 / NBRC 100330 / Delta H</strain>
    </source>
</reference>